<keyword id="KW-0456">Lyase</keyword>
<dbReference type="EC" id="4.2.1.96" evidence="1"/>
<dbReference type="EMBL" id="CP000887">
    <property type="protein sequence ID" value="ACD71633.1"/>
    <property type="molecule type" value="Genomic_DNA"/>
</dbReference>
<dbReference type="RefSeq" id="WP_002965330.1">
    <property type="nucleotide sequence ID" value="NC_010742.1"/>
</dbReference>
<dbReference type="SMR" id="B2S7X9"/>
<dbReference type="KEGG" id="bmc:BAbS19_I00730"/>
<dbReference type="HOGENOM" id="CLU_081974_3_2_5"/>
<dbReference type="Proteomes" id="UP000002565">
    <property type="component" value="Chromosome 1"/>
</dbReference>
<dbReference type="GO" id="GO:0008124">
    <property type="term" value="F:4-alpha-hydroxytetrahydrobiopterin dehydratase activity"/>
    <property type="evidence" value="ECO:0007669"/>
    <property type="project" value="UniProtKB-UniRule"/>
</dbReference>
<dbReference type="GO" id="GO:0006729">
    <property type="term" value="P:tetrahydrobiopterin biosynthetic process"/>
    <property type="evidence" value="ECO:0007669"/>
    <property type="project" value="InterPro"/>
</dbReference>
<dbReference type="CDD" id="cd00914">
    <property type="entry name" value="PCD_DCoH_subfamily_b"/>
    <property type="match status" value="1"/>
</dbReference>
<dbReference type="Gene3D" id="3.30.1360.20">
    <property type="entry name" value="Transcriptional coactivator/pterin dehydratase"/>
    <property type="match status" value="1"/>
</dbReference>
<dbReference type="HAMAP" id="MF_00434">
    <property type="entry name" value="Pterin_4_alpha"/>
    <property type="match status" value="1"/>
</dbReference>
<dbReference type="InterPro" id="IPR036428">
    <property type="entry name" value="PCD_sf"/>
</dbReference>
<dbReference type="InterPro" id="IPR001533">
    <property type="entry name" value="Pterin_deHydtase"/>
</dbReference>
<dbReference type="NCBIfam" id="NF002017">
    <property type="entry name" value="PRK00823.1-2"/>
    <property type="match status" value="1"/>
</dbReference>
<dbReference type="NCBIfam" id="NF002018">
    <property type="entry name" value="PRK00823.1-3"/>
    <property type="match status" value="1"/>
</dbReference>
<dbReference type="PANTHER" id="PTHR12599">
    <property type="entry name" value="PTERIN-4-ALPHA-CARBINOLAMINE DEHYDRATASE"/>
    <property type="match status" value="1"/>
</dbReference>
<dbReference type="PANTHER" id="PTHR12599:SF0">
    <property type="entry name" value="PTERIN-4-ALPHA-CARBINOLAMINE DEHYDRATASE"/>
    <property type="match status" value="1"/>
</dbReference>
<dbReference type="Pfam" id="PF01329">
    <property type="entry name" value="Pterin_4a"/>
    <property type="match status" value="1"/>
</dbReference>
<dbReference type="SUPFAM" id="SSF55248">
    <property type="entry name" value="PCD-like"/>
    <property type="match status" value="1"/>
</dbReference>
<reference key="1">
    <citation type="journal article" date="2008" name="PLoS ONE">
        <title>Genome sequence of Brucella abortus vaccine strain S19 compared to virulent strains yields candidate virulence genes.</title>
        <authorList>
            <person name="Crasta O.R."/>
            <person name="Folkerts O."/>
            <person name="Fei Z."/>
            <person name="Mane S.P."/>
            <person name="Evans C."/>
            <person name="Martino-Catt S."/>
            <person name="Bricker B."/>
            <person name="Yu G."/>
            <person name="Du L."/>
            <person name="Sobral B.W."/>
        </authorList>
    </citation>
    <scope>NUCLEOTIDE SEQUENCE [LARGE SCALE GENOMIC DNA]</scope>
    <source>
        <strain>S19</strain>
    </source>
</reference>
<protein>
    <recommendedName>
        <fullName evidence="1">Putative pterin-4-alpha-carbinolamine dehydratase</fullName>
        <shortName evidence="1">PHS</shortName>
        <ecNumber evidence="1">4.2.1.96</ecNumber>
    </recommendedName>
    <alternativeName>
        <fullName evidence="1">4-alpha-hydroxy-tetrahydropterin dehydratase</fullName>
    </alternativeName>
    <alternativeName>
        <fullName evidence="1">Pterin carbinolamine dehydratase</fullName>
        <shortName evidence="1">PCD</shortName>
    </alternativeName>
</protein>
<accession>B2S7X9</accession>
<gene>
    <name type="ordered locus">BAbS19_I00730</name>
</gene>
<organism>
    <name type="scientific">Brucella abortus (strain S19)</name>
    <dbReference type="NCBI Taxonomy" id="430066"/>
    <lineage>
        <taxon>Bacteria</taxon>
        <taxon>Pseudomonadati</taxon>
        <taxon>Pseudomonadota</taxon>
        <taxon>Alphaproteobacteria</taxon>
        <taxon>Hyphomicrobiales</taxon>
        <taxon>Brucellaceae</taxon>
        <taxon>Brucella/Ochrobactrum group</taxon>
        <taxon>Brucella</taxon>
    </lineage>
</organism>
<name>PHS_BRUA1</name>
<proteinExistence type="inferred from homology"/>
<comment type="catalytic activity">
    <reaction evidence="1">
        <text>(4aS,6R)-4a-hydroxy-L-erythro-5,6,7,8-tetrahydrobiopterin = (6R)-L-erythro-6,7-dihydrobiopterin + H2O</text>
        <dbReference type="Rhea" id="RHEA:11920"/>
        <dbReference type="ChEBI" id="CHEBI:15377"/>
        <dbReference type="ChEBI" id="CHEBI:15642"/>
        <dbReference type="ChEBI" id="CHEBI:43120"/>
        <dbReference type="EC" id="4.2.1.96"/>
    </reaction>
</comment>
<comment type="similarity">
    <text evidence="1">Belongs to the pterin-4-alpha-carbinolamine dehydratase family.</text>
</comment>
<evidence type="ECO:0000255" key="1">
    <source>
        <dbReference type="HAMAP-Rule" id="MF_00434"/>
    </source>
</evidence>
<sequence>MARNRLTESEMNEALRALDGWQKVDGREAITRSFKFKDFSTAFGFMAQAALYAEKLDHHPEWFNAYNRVDVTLATHSENGVTELDIKMARKMNAIAG</sequence>
<feature type="chain" id="PRO_1000192908" description="Putative pterin-4-alpha-carbinolamine dehydratase">
    <location>
        <begin position="1"/>
        <end position="97"/>
    </location>
</feature>